<proteinExistence type="evidence at protein level"/>
<gene>
    <name type="primary">TMEM130</name>
    <name type="ORF">UNQ719/PRO1383</name>
</gene>
<protein>
    <recommendedName>
        <fullName>Transmembrane protein 130</fullName>
    </recommendedName>
</protein>
<name>TM130_HUMAN</name>
<comment type="interaction">
    <interactant intactId="EBI-19763514">
        <id>Q8N3G9</id>
    </interactant>
    <interactant intactId="EBI-10232876">
        <id>Q14416</id>
        <label>GRM2</label>
    </interactant>
    <organismsDiffer>false</organismsDiffer>
    <experiments>3</experiments>
</comment>
<comment type="interaction">
    <interactant intactId="EBI-19763514">
        <id>Q8N3G9</id>
    </interactant>
    <interactant intactId="EBI-3920969">
        <id>Q6N075</id>
        <label>MFSD5</label>
    </interactant>
    <organismsDiffer>false</organismsDiffer>
    <experiments>3</experiments>
</comment>
<comment type="interaction">
    <interactant intactId="EBI-19763514">
        <id>Q8N3G9</id>
    </interactant>
    <interactant intactId="EBI-3919611">
        <id>Q16617</id>
        <label>NKG7</label>
    </interactant>
    <organismsDiffer>false</organismsDiffer>
    <experiments>3</experiments>
</comment>
<comment type="interaction">
    <interactant intactId="EBI-19763514">
        <id>Q8N3G9</id>
    </interactant>
    <interactant intactId="EBI-2804156">
        <id>Q6UX06</id>
        <label>OLFM4</label>
    </interactant>
    <organismsDiffer>false</organismsDiffer>
    <experiments>3</experiments>
</comment>
<comment type="interaction">
    <interactant intactId="EBI-19763514">
        <id>Q8N3G9</id>
    </interactant>
    <interactant intactId="EBI-17180304">
        <id>Q07326</id>
        <label>PIGF</label>
    </interactant>
    <organismsDiffer>false</organismsDiffer>
    <experiments>3</experiments>
</comment>
<comment type="interaction">
    <interactant intactId="EBI-19763514">
        <id>Q8N3G9</id>
    </interactant>
    <interactant intactId="EBI-2825135">
        <id>P22732</id>
        <label>SLC2A5</label>
    </interactant>
    <organismsDiffer>false</organismsDiffer>
    <experiments>3</experiments>
</comment>
<comment type="interaction">
    <interactant intactId="EBI-19763514">
        <id>Q8N3G9</id>
    </interactant>
    <interactant intactId="EBI-10281213">
        <id>Q969S0</id>
        <label>SLC35B4</label>
    </interactant>
    <organismsDiffer>false</organismsDiffer>
    <experiments>3</experiments>
</comment>
<comment type="interaction">
    <interactant intactId="EBI-19763514">
        <id>Q8N3G9</id>
    </interactant>
    <interactant intactId="EBI-8644968">
        <id>Q9NV29</id>
        <label>TMEM100</label>
    </interactant>
    <organismsDiffer>false</organismsDiffer>
    <experiments>3</experiments>
</comment>
<comment type="interaction">
    <interactant intactId="EBI-19763514">
        <id>Q8N3G9</id>
    </interactant>
    <interactant intactId="EBI-3914288">
        <id>O60636</id>
        <label>TSPAN2</label>
    </interactant>
    <organismsDiffer>false</organismsDiffer>
    <experiments>3</experiments>
</comment>
<comment type="interaction">
    <interactant intactId="EBI-19763514">
        <id>Q8N3G9</id>
    </interactant>
    <interactant intactId="EBI-751210">
        <id>Q96EC8</id>
        <label>YIPF6</label>
    </interactant>
    <organismsDiffer>false</organismsDiffer>
    <experiments>3</experiments>
</comment>
<comment type="subcellular location">
    <subcellularLocation>
        <location evidence="3">Golgi apparatus membrane</location>
        <topology evidence="3">Single-pass type I membrane protein</topology>
    </subcellularLocation>
</comment>
<comment type="alternative products">
    <event type="alternative splicing"/>
    <isoform>
        <id>Q8N3G9-1</id>
        <name>1</name>
        <sequence type="displayed"/>
    </isoform>
    <isoform>
        <id>Q8N3G9-2</id>
        <name>2</name>
        <sequence type="described" ref="VSP_023258"/>
    </isoform>
    <isoform>
        <id>Q8N3G9-3</id>
        <name>3</name>
        <sequence type="described" ref="VSP_023257 VSP_023258"/>
    </isoform>
</comment>
<accession>Q8N3G9</accession>
<accession>A4D266</accession>
<accession>B7Z364</accession>
<accession>Q8IY46</accession>
<accession>Q8N0W9</accession>
<accession>Q8N3R2</accession>
<evidence type="ECO:0000255" key="1"/>
<evidence type="ECO:0000255" key="2">
    <source>
        <dbReference type="PROSITE-ProRule" id="PRU00151"/>
    </source>
</evidence>
<evidence type="ECO:0000269" key="3">
    <source>
    </source>
</evidence>
<evidence type="ECO:0000303" key="4">
    <source>
    </source>
</evidence>
<evidence type="ECO:0000303" key="5">
    <source>
    </source>
</evidence>
<evidence type="ECO:0000303" key="6">
    <source>
    </source>
</evidence>
<evidence type="ECO:0000303" key="7">
    <source>
    </source>
</evidence>
<evidence type="ECO:0000305" key="8"/>
<organism>
    <name type="scientific">Homo sapiens</name>
    <name type="common">Human</name>
    <dbReference type="NCBI Taxonomy" id="9606"/>
    <lineage>
        <taxon>Eukaryota</taxon>
        <taxon>Metazoa</taxon>
        <taxon>Chordata</taxon>
        <taxon>Craniata</taxon>
        <taxon>Vertebrata</taxon>
        <taxon>Euteleostomi</taxon>
        <taxon>Mammalia</taxon>
        <taxon>Eutheria</taxon>
        <taxon>Euarchontoglires</taxon>
        <taxon>Primates</taxon>
        <taxon>Haplorrhini</taxon>
        <taxon>Catarrhini</taxon>
        <taxon>Hominidae</taxon>
        <taxon>Homo</taxon>
    </lineage>
</organism>
<reference key="1">
    <citation type="journal article" date="2003" name="Genome Res.">
        <title>The secreted protein discovery initiative (SPDI), a large-scale effort to identify novel human secreted and transmembrane proteins: a bioinformatics assessment.</title>
        <authorList>
            <person name="Clark H.F."/>
            <person name="Gurney A.L."/>
            <person name="Abaya E."/>
            <person name="Baker K."/>
            <person name="Baldwin D.T."/>
            <person name="Brush J."/>
            <person name="Chen J."/>
            <person name="Chow B."/>
            <person name="Chui C."/>
            <person name="Crowley C."/>
            <person name="Currell B."/>
            <person name="Deuel B."/>
            <person name="Dowd P."/>
            <person name="Eaton D."/>
            <person name="Foster J.S."/>
            <person name="Grimaldi C."/>
            <person name="Gu Q."/>
            <person name="Hass P.E."/>
            <person name="Heldens S."/>
            <person name="Huang A."/>
            <person name="Kim H.S."/>
            <person name="Klimowski L."/>
            <person name="Jin Y."/>
            <person name="Johnson S."/>
            <person name="Lee J."/>
            <person name="Lewis L."/>
            <person name="Liao D."/>
            <person name="Mark M.R."/>
            <person name="Robbie E."/>
            <person name="Sanchez C."/>
            <person name="Schoenfeld J."/>
            <person name="Seshagiri S."/>
            <person name="Simmons L."/>
            <person name="Singh J."/>
            <person name="Smith V."/>
            <person name="Stinson J."/>
            <person name="Vagts A."/>
            <person name="Vandlen R.L."/>
            <person name="Watanabe C."/>
            <person name="Wieand D."/>
            <person name="Woods K."/>
            <person name="Xie M.-H."/>
            <person name="Yansura D.G."/>
            <person name="Yi S."/>
            <person name="Yu G."/>
            <person name="Yuan J."/>
            <person name="Zhang M."/>
            <person name="Zhang Z."/>
            <person name="Goddard A.D."/>
            <person name="Wood W.I."/>
            <person name="Godowski P.J."/>
            <person name="Gray A.M."/>
        </authorList>
    </citation>
    <scope>NUCLEOTIDE SEQUENCE [LARGE SCALE MRNA] (ISOFORM 2)</scope>
</reference>
<reference key="2">
    <citation type="journal article" date="2004" name="Nat. Genet.">
        <title>Complete sequencing and characterization of 21,243 full-length human cDNAs.</title>
        <authorList>
            <person name="Ota T."/>
            <person name="Suzuki Y."/>
            <person name="Nishikawa T."/>
            <person name="Otsuki T."/>
            <person name="Sugiyama T."/>
            <person name="Irie R."/>
            <person name="Wakamatsu A."/>
            <person name="Hayashi K."/>
            <person name="Sato H."/>
            <person name="Nagai K."/>
            <person name="Kimura K."/>
            <person name="Makita H."/>
            <person name="Sekine M."/>
            <person name="Obayashi M."/>
            <person name="Nishi T."/>
            <person name="Shibahara T."/>
            <person name="Tanaka T."/>
            <person name="Ishii S."/>
            <person name="Yamamoto J."/>
            <person name="Saito K."/>
            <person name="Kawai Y."/>
            <person name="Isono Y."/>
            <person name="Nakamura Y."/>
            <person name="Nagahari K."/>
            <person name="Murakami K."/>
            <person name="Yasuda T."/>
            <person name="Iwayanagi T."/>
            <person name="Wagatsuma M."/>
            <person name="Shiratori A."/>
            <person name="Sudo H."/>
            <person name="Hosoiri T."/>
            <person name="Kaku Y."/>
            <person name="Kodaira H."/>
            <person name="Kondo H."/>
            <person name="Sugawara M."/>
            <person name="Takahashi M."/>
            <person name="Kanda K."/>
            <person name="Yokoi T."/>
            <person name="Furuya T."/>
            <person name="Kikkawa E."/>
            <person name="Omura Y."/>
            <person name="Abe K."/>
            <person name="Kamihara K."/>
            <person name="Katsuta N."/>
            <person name="Sato K."/>
            <person name="Tanikawa M."/>
            <person name="Yamazaki M."/>
            <person name="Ninomiya K."/>
            <person name="Ishibashi T."/>
            <person name="Yamashita H."/>
            <person name="Murakawa K."/>
            <person name="Fujimori K."/>
            <person name="Tanai H."/>
            <person name="Kimata M."/>
            <person name="Watanabe M."/>
            <person name="Hiraoka S."/>
            <person name="Chiba Y."/>
            <person name="Ishida S."/>
            <person name="Ono Y."/>
            <person name="Takiguchi S."/>
            <person name="Watanabe S."/>
            <person name="Yosida M."/>
            <person name="Hotuta T."/>
            <person name="Kusano J."/>
            <person name="Kanehori K."/>
            <person name="Takahashi-Fujii A."/>
            <person name="Hara H."/>
            <person name="Tanase T.-O."/>
            <person name="Nomura Y."/>
            <person name="Togiya S."/>
            <person name="Komai F."/>
            <person name="Hara R."/>
            <person name="Takeuchi K."/>
            <person name="Arita M."/>
            <person name="Imose N."/>
            <person name="Musashino K."/>
            <person name="Yuuki H."/>
            <person name="Oshima A."/>
            <person name="Sasaki N."/>
            <person name="Aotsuka S."/>
            <person name="Yoshikawa Y."/>
            <person name="Matsunawa H."/>
            <person name="Ichihara T."/>
            <person name="Shiohata N."/>
            <person name="Sano S."/>
            <person name="Moriya S."/>
            <person name="Momiyama H."/>
            <person name="Satoh N."/>
            <person name="Takami S."/>
            <person name="Terashima Y."/>
            <person name="Suzuki O."/>
            <person name="Nakagawa S."/>
            <person name="Senoh A."/>
            <person name="Mizoguchi H."/>
            <person name="Goto Y."/>
            <person name="Shimizu F."/>
            <person name="Wakebe H."/>
            <person name="Hishigaki H."/>
            <person name="Watanabe T."/>
            <person name="Sugiyama A."/>
            <person name="Takemoto M."/>
            <person name="Kawakami B."/>
            <person name="Yamazaki M."/>
            <person name="Watanabe K."/>
            <person name="Kumagai A."/>
            <person name="Itakura S."/>
            <person name="Fukuzumi Y."/>
            <person name="Fujimori Y."/>
            <person name="Komiyama M."/>
            <person name="Tashiro H."/>
            <person name="Tanigami A."/>
            <person name="Fujiwara T."/>
            <person name="Ono T."/>
            <person name="Yamada K."/>
            <person name="Fujii Y."/>
            <person name="Ozaki K."/>
            <person name="Hirao M."/>
            <person name="Ohmori Y."/>
            <person name="Kawabata A."/>
            <person name="Hikiji T."/>
            <person name="Kobatake N."/>
            <person name="Inagaki H."/>
            <person name="Ikema Y."/>
            <person name="Okamoto S."/>
            <person name="Okitani R."/>
            <person name="Kawakami T."/>
            <person name="Noguchi S."/>
            <person name="Itoh T."/>
            <person name="Shigeta K."/>
            <person name="Senba T."/>
            <person name="Matsumura K."/>
            <person name="Nakajima Y."/>
            <person name="Mizuno T."/>
            <person name="Morinaga M."/>
            <person name="Sasaki M."/>
            <person name="Togashi T."/>
            <person name="Oyama M."/>
            <person name="Hata H."/>
            <person name="Watanabe M."/>
            <person name="Komatsu T."/>
            <person name="Mizushima-Sugano J."/>
            <person name="Satoh T."/>
            <person name="Shirai Y."/>
            <person name="Takahashi Y."/>
            <person name="Nakagawa K."/>
            <person name="Okumura K."/>
            <person name="Nagase T."/>
            <person name="Nomura N."/>
            <person name="Kikuchi H."/>
            <person name="Masuho Y."/>
            <person name="Yamashita R."/>
            <person name="Nakai K."/>
            <person name="Yada T."/>
            <person name="Nakamura Y."/>
            <person name="Ohara O."/>
            <person name="Isogai T."/>
            <person name="Sugano S."/>
        </authorList>
    </citation>
    <scope>NUCLEOTIDE SEQUENCE [LARGE SCALE MRNA] (ISOFORM 3)</scope>
    <source>
        <tissue>Hippocampus</tissue>
    </source>
</reference>
<reference key="3">
    <citation type="journal article" date="2007" name="BMC Genomics">
        <title>The full-ORF clone resource of the German cDNA consortium.</title>
        <authorList>
            <person name="Bechtel S."/>
            <person name="Rosenfelder H."/>
            <person name="Duda A."/>
            <person name="Schmidt C.P."/>
            <person name="Ernst U."/>
            <person name="Wellenreuther R."/>
            <person name="Mehrle A."/>
            <person name="Schuster C."/>
            <person name="Bahr A."/>
            <person name="Bloecker H."/>
            <person name="Heubner D."/>
            <person name="Hoerlein A."/>
            <person name="Michel G."/>
            <person name="Wedler H."/>
            <person name="Koehrer K."/>
            <person name="Ottenwaelder B."/>
            <person name="Poustka A."/>
            <person name="Wiemann S."/>
            <person name="Schupp I."/>
        </authorList>
    </citation>
    <scope>NUCLEOTIDE SEQUENCE [LARGE SCALE MRNA] (ISOFORMS 1 AND 2)</scope>
    <source>
        <tissue>Amygdala</tissue>
    </source>
</reference>
<reference key="4">
    <citation type="journal article" date="2003" name="Science">
        <title>Human chromosome 7: DNA sequence and biology.</title>
        <authorList>
            <person name="Scherer S.W."/>
            <person name="Cheung J."/>
            <person name="MacDonald J.R."/>
            <person name="Osborne L.R."/>
            <person name="Nakabayashi K."/>
            <person name="Herbrick J.-A."/>
            <person name="Carson A.R."/>
            <person name="Parker-Katiraee L."/>
            <person name="Skaug J."/>
            <person name="Khaja R."/>
            <person name="Zhang J."/>
            <person name="Hudek A.K."/>
            <person name="Li M."/>
            <person name="Haddad M."/>
            <person name="Duggan G.E."/>
            <person name="Fernandez B.A."/>
            <person name="Kanematsu E."/>
            <person name="Gentles S."/>
            <person name="Christopoulos C.C."/>
            <person name="Choufani S."/>
            <person name="Kwasnicka D."/>
            <person name="Zheng X.H."/>
            <person name="Lai Z."/>
            <person name="Nusskern D.R."/>
            <person name="Zhang Q."/>
            <person name="Gu Z."/>
            <person name="Lu F."/>
            <person name="Zeesman S."/>
            <person name="Nowaczyk M.J."/>
            <person name="Teshima I."/>
            <person name="Chitayat D."/>
            <person name="Shuman C."/>
            <person name="Weksberg R."/>
            <person name="Zackai E.H."/>
            <person name="Grebe T.A."/>
            <person name="Cox S.R."/>
            <person name="Kirkpatrick S.J."/>
            <person name="Rahman N."/>
            <person name="Friedman J.M."/>
            <person name="Heng H.H.Q."/>
            <person name="Pelicci P.G."/>
            <person name="Lo-Coco F."/>
            <person name="Belloni E."/>
            <person name="Shaffer L.G."/>
            <person name="Pober B."/>
            <person name="Morton C.C."/>
            <person name="Gusella J.F."/>
            <person name="Bruns G.A.P."/>
            <person name="Korf B.R."/>
            <person name="Quade B.J."/>
            <person name="Ligon A.H."/>
            <person name="Ferguson H."/>
            <person name="Higgins A.W."/>
            <person name="Leach N.T."/>
            <person name="Herrick S.R."/>
            <person name="Lemyre E."/>
            <person name="Farra C.G."/>
            <person name="Kim H.-G."/>
            <person name="Summers A.M."/>
            <person name="Gripp K.W."/>
            <person name="Roberts W."/>
            <person name="Szatmari P."/>
            <person name="Winsor E.J.T."/>
            <person name="Grzeschik K.-H."/>
            <person name="Teebi A."/>
            <person name="Minassian B.A."/>
            <person name="Kere J."/>
            <person name="Armengol L."/>
            <person name="Pujana M.A."/>
            <person name="Estivill X."/>
            <person name="Wilson M.D."/>
            <person name="Koop B.F."/>
            <person name="Tosi S."/>
            <person name="Moore G.E."/>
            <person name="Boright A.P."/>
            <person name="Zlotorynski E."/>
            <person name="Kerem B."/>
            <person name="Kroisel P.M."/>
            <person name="Petek E."/>
            <person name="Oscier D.G."/>
            <person name="Mould S.J."/>
            <person name="Doehner H."/>
            <person name="Doehner K."/>
            <person name="Rommens J.M."/>
            <person name="Vincent J.B."/>
            <person name="Venter J.C."/>
            <person name="Li P.W."/>
            <person name="Mural R.J."/>
            <person name="Adams M.D."/>
            <person name="Tsui L.-C."/>
        </authorList>
    </citation>
    <scope>NUCLEOTIDE SEQUENCE [LARGE SCALE GENOMIC DNA]</scope>
</reference>
<reference key="5">
    <citation type="submission" date="2005-09" db="EMBL/GenBank/DDBJ databases">
        <authorList>
            <person name="Mural R.J."/>
            <person name="Istrail S."/>
            <person name="Sutton G.G."/>
            <person name="Florea L."/>
            <person name="Halpern A.L."/>
            <person name="Mobarry C.M."/>
            <person name="Lippert R."/>
            <person name="Walenz B."/>
            <person name="Shatkay H."/>
            <person name="Dew I."/>
            <person name="Miller J.R."/>
            <person name="Flanigan M.J."/>
            <person name="Edwards N.J."/>
            <person name="Bolanos R."/>
            <person name="Fasulo D."/>
            <person name="Halldorsson B.V."/>
            <person name="Hannenhalli S."/>
            <person name="Turner R."/>
            <person name="Yooseph S."/>
            <person name="Lu F."/>
            <person name="Nusskern D.R."/>
            <person name="Shue B.C."/>
            <person name="Zheng X.H."/>
            <person name="Zhong F."/>
            <person name="Delcher A.L."/>
            <person name="Huson D.H."/>
            <person name="Kravitz S.A."/>
            <person name="Mouchard L."/>
            <person name="Reinert K."/>
            <person name="Remington K.A."/>
            <person name="Clark A.G."/>
            <person name="Waterman M.S."/>
            <person name="Eichler E.E."/>
            <person name="Adams M.D."/>
            <person name="Hunkapiller M.W."/>
            <person name="Myers E.W."/>
            <person name="Venter J.C."/>
        </authorList>
    </citation>
    <scope>NUCLEOTIDE SEQUENCE [LARGE SCALE GENOMIC DNA]</scope>
</reference>
<reference key="6">
    <citation type="journal article" date="2004" name="Genome Res.">
        <title>The status, quality, and expansion of the NIH full-length cDNA project: the Mammalian Gene Collection (MGC).</title>
        <authorList>
            <consortium name="The MGC Project Team"/>
        </authorList>
    </citation>
    <scope>NUCLEOTIDE SEQUENCE [LARGE SCALE MRNA] (ISOFORMS 2 AND 3)</scope>
    <source>
        <tissue>Brain</tissue>
    </source>
</reference>
<reference key="7">
    <citation type="journal article" date="2000" name="EMBO Rep.">
        <title>Systematic subcellular localization of novel proteins identified by large-scale cDNA sequencing.</title>
        <authorList>
            <person name="Simpson J.C."/>
            <person name="Wellenreuther R."/>
            <person name="Poustka A."/>
            <person name="Pepperkok R."/>
            <person name="Wiemann S."/>
        </authorList>
    </citation>
    <scope>SUBCELLULAR LOCATION</scope>
</reference>
<dbReference type="EMBL" id="AY358583">
    <property type="protein sequence ID" value="AAQ88946.1"/>
    <property type="molecule type" value="mRNA"/>
</dbReference>
<dbReference type="EMBL" id="AK295543">
    <property type="protein sequence ID" value="BAH12100.1"/>
    <property type="molecule type" value="mRNA"/>
</dbReference>
<dbReference type="EMBL" id="AL832523">
    <property type="protein sequence ID" value="CAD38628.1"/>
    <property type="molecule type" value="mRNA"/>
</dbReference>
<dbReference type="EMBL" id="AL834348">
    <property type="protein sequence ID" value="CAD39013.1"/>
    <property type="molecule type" value="mRNA"/>
</dbReference>
<dbReference type="EMBL" id="AL834349">
    <property type="protein sequence ID" value="CAD39014.1"/>
    <property type="molecule type" value="mRNA"/>
</dbReference>
<dbReference type="EMBL" id="CH471091">
    <property type="protein sequence ID" value="EAW76701.1"/>
    <property type="molecule type" value="Genomic_DNA"/>
</dbReference>
<dbReference type="EMBL" id="CH471091">
    <property type="protein sequence ID" value="EAW76704.1"/>
    <property type="molecule type" value="Genomic_DNA"/>
</dbReference>
<dbReference type="EMBL" id="CH236956">
    <property type="protein sequence ID" value="EAL23888.1"/>
    <property type="molecule type" value="Genomic_DNA"/>
</dbReference>
<dbReference type="EMBL" id="BC030793">
    <property type="protein sequence ID" value="AAH30793.1"/>
    <property type="molecule type" value="mRNA"/>
</dbReference>
<dbReference type="EMBL" id="BC037895">
    <property type="protein sequence ID" value="AAH37895.2"/>
    <property type="molecule type" value="mRNA"/>
</dbReference>
<dbReference type="CCDS" id="CCDS47649.1">
    <molecule id="Q8N3G9-3"/>
</dbReference>
<dbReference type="CCDS" id="CCDS47650.1">
    <molecule id="Q8N3G9-1"/>
</dbReference>
<dbReference type="CCDS" id="CCDS5658.1">
    <molecule id="Q8N3G9-2"/>
</dbReference>
<dbReference type="RefSeq" id="NP_001127922.1">
    <molecule id="Q8N3G9-1"/>
    <property type="nucleotide sequence ID" value="NM_001134450.2"/>
</dbReference>
<dbReference type="RefSeq" id="NP_001127923.1">
    <molecule id="Q8N3G9-3"/>
    <property type="nucleotide sequence ID" value="NM_001134451.2"/>
</dbReference>
<dbReference type="RefSeq" id="NP_690877.1">
    <molecule id="Q8N3G9-2"/>
    <property type="nucleotide sequence ID" value="NM_152913.3"/>
</dbReference>
<dbReference type="BioGRID" id="128818">
    <property type="interactions" value="36"/>
</dbReference>
<dbReference type="FunCoup" id="Q8N3G9">
    <property type="interactions" value="248"/>
</dbReference>
<dbReference type="IntAct" id="Q8N3G9">
    <property type="interactions" value="35"/>
</dbReference>
<dbReference type="STRING" id="9606.ENSP00000413163"/>
<dbReference type="GlyCosmos" id="Q8N3G9">
    <property type="glycosylation" value="3 sites, No reported glycans"/>
</dbReference>
<dbReference type="GlyGen" id="Q8N3G9">
    <property type="glycosylation" value="4 sites, 1 N-linked glycan (1 site)"/>
</dbReference>
<dbReference type="iPTMnet" id="Q8N3G9"/>
<dbReference type="PhosphoSitePlus" id="Q8N3G9"/>
<dbReference type="BioMuta" id="TMEM130"/>
<dbReference type="DMDM" id="74714845"/>
<dbReference type="MassIVE" id="Q8N3G9"/>
<dbReference type="PaxDb" id="9606-ENSP00000413163"/>
<dbReference type="PeptideAtlas" id="Q8N3G9"/>
<dbReference type="ProteomicsDB" id="71800">
    <molecule id="Q8N3G9-1"/>
</dbReference>
<dbReference type="ProteomicsDB" id="71801">
    <molecule id="Q8N3G9-2"/>
</dbReference>
<dbReference type="ProteomicsDB" id="71802">
    <molecule id="Q8N3G9-3"/>
</dbReference>
<dbReference type="Antibodypedia" id="2578">
    <property type="antibodies" value="23 antibodies from 10 providers"/>
</dbReference>
<dbReference type="DNASU" id="222865"/>
<dbReference type="Ensembl" id="ENST00000339375.9">
    <molecule id="Q8N3G9-2"/>
    <property type="protein sequence ID" value="ENSP00000341256.4"/>
    <property type="gene ID" value="ENSG00000166448.15"/>
</dbReference>
<dbReference type="Ensembl" id="ENST00000345589.4">
    <molecule id="Q8N3G9-3"/>
    <property type="protein sequence ID" value="ENSP00000330262.4"/>
    <property type="gene ID" value="ENSG00000166448.15"/>
</dbReference>
<dbReference type="Ensembl" id="ENST00000416379.6">
    <molecule id="Q8N3G9-1"/>
    <property type="protein sequence ID" value="ENSP00000413163.2"/>
    <property type="gene ID" value="ENSG00000166448.15"/>
</dbReference>
<dbReference type="GeneID" id="222865"/>
<dbReference type="KEGG" id="hsa:222865"/>
<dbReference type="MANE-Select" id="ENST00000339375.9">
    <molecule id="Q8N3G9-2"/>
    <property type="protein sequence ID" value="ENSP00000341256.4"/>
    <property type="RefSeq nucleotide sequence ID" value="NM_152913.3"/>
    <property type="RefSeq protein sequence ID" value="NP_690877.1"/>
</dbReference>
<dbReference type="UCSC" id="uc003upn.4">
    <molecule id="Q8N3G9-1"/>
    <property type="organism name" value="human"/>
</dbReference>
<dbReference type="AGR" id="HGNC:25429"/>
<dbReference type="CTD" id="222865"/>
<dbReference type="DisGeNET" id="222865"/>
<dbReference type="GeneCards" id="TMEM130"/>
<dbReference type="HGNC" id="HGNC:25429">
    <property type="gene designation" value="TMEM130"/>
</dbReference>
<dbReference type="HPA" id="ENSG00000166448">
    <property type="expression patterns" value="Tissue enhanced (brain, pituitary gland)"/>
</dbReference>
<dbReference type="neXtProt" id="NX_Q8N3G9"/>
<dbReference type="OpenTargets" id="ENSG00000166448"/>
<dbReference type="PharmGKB" id="PA143485650"/>
<dbReference type="VEuPathDB" id="HostDB:ENSG00000166448"/>
<dbReference type="eggNOG" id="ENOG502QSPZ">
    <property type="taxonomic scope" value="Eukaryota"/>
</dbReference>
<dbReference type="GeneTree" id="ENSGT00950000183188"/>
<dbReference type="InParanoid" id="Q8N3G9"/>
<dbReference type="OMA" id="PPLTMCW"/>
<dbReference type="OrthoDB" id="8510435at2759"/>
<dbReference type="PAN-GO" id="Q8N3G9">
    <property type="GO annotations" value="1 GO annotation based on evolutionary models"/>
</dbReference>
<dbReference type="PhylomeDB" id="Q8N3G9"/>
<dbReference type="TreeFam" id="TF336431"/>
<dbReference type="PathwayCommons" id="Q8N3G9"/>
<dbReference type="SignaLink" id="Q8N3G9"/>
<dbReference type="BioGRID-ORCS" id="222865">
    <property type="hits" value="51 hits in 1146 CRISPR screens"/>
</dbReference>
<dbReference type="ChiTaRS" id="TMEM130">
    <property type="organism name" value="human"/>
</dbReference>
<dbReference type="GeneWiki" id="TMEM130"/>
<dbReference type="GenomeRNAi" id="222865"/>
<dbReference type="Pharos" id="Q8N3G9">
    <property type="development level" value="Tdark"/>
</dbReference>
<dbReference type="PRO" id="PR:Q8N3G9"/>
<dbReference type="Proteomes" id="UP000005640">
    <property type="component" value="Chromosome 7"/>
</dbReference>
<dbReference type="RNAct" id="Q8N3G9">
    <property type="molecule type" value="protein"/>
</dbReference>
<dbReference type="Bgee" id="ENSG00000166448">
    <property type="expression patterns" value="Expressed in Brodmann (1909) area 9 and 127 other cell types or tissues"/>
</dbReference>
<dbReference type="ExpressionAtlas" id="Q8N3G9">
    <property type="expression patterns" value="baseline and differential"/>
</dbReference>
<dbReference type="GO" id="GO:0005794">
    <property type="term" value="C:Golgi apparatus"/>
    <property type="evidence" value="ECO:0000314"/>
    <property type="project" value="HPA"/>
</dbReference>
<dbReference type="GO" id="GO:0000139">
    <property type="term" value="C:Golgi membrane"/>
    <property type="evidence" value="ECO:0007669"/>
    <property type="project" value="UniProtKB-SubCell"/>
</dbReference>
<dbReference type="GO" id="GO:0005886">
    <property type="term" value="C:plasma membrane"/>
    <property type="evidence" value="ECO:0000318"/>
    <property type="project" value="GO_Central"/>
</dbReference>
<dbReference type="CDD" id="cd00146">
    <property type="entry name" value="PKD"/>
    <property type="match status" value="1"/>
</dbReference>
<dbReference type="FunFam" id="2.60.40.10:FF:000668">
    <property type="entry name" value="transmembrane protein 130 isoform X2"/>
    <property type="match status" value="1"/>
</dbReference>
<dbReference type="Gene3D" id="2.60.40.10">
    <property type="entry name" value="Immunoglobulins"/>
    <property type="match status" value="1"/>
</dbReference>
<dbReference type="InterPro" id="IPR013783">
    <property type="entry name" value="Ig-like_fold"/>
</dbReference>
<dbReference type="InterPro" id="IPR045219">
    <property type="entry name" value="PKAT"/>
</dbReference>
<dbReference type="InterPro" id="IPR046846">
    <property type="entry name" value="PKAT_KLD"/>
</dbReference>
<dbReference type="InterPro" id="IPR000601">
    <property type="entry name" value="PKD_dom"/>
</dbReference>
<dbReference type="InterPro" id="IPR035986">
    <property type="entry name" value="PKD_dom_sf"/>
</dbReference>
<dbReference type="PANTHER" id="PTHR11861">
    <property type="entry name" value="MELANOCYTE PROTEIN PMEL 17-RELATED"/>
    <property type="match status" value="1"/>
</dbReference>
<dbReference type="PANTHER" id="PTHR11861:SF10">
    <property type="entry name" value="TRANSMEMBRANE PROTEIN 130"/>
    <property type="match status" value="1"/>
</dbReference>
<dbReference type="Pfam" id="PF20433">
    <property type="entry name" value="PKAT_KLD"/>
    <property type="match status" value="1"/>
</dbReference>
<dbReference type="SUPFAM" id="SSF49299">
    <property type="entry name" value="PKD domain"/>
    <property type="match status" value="2"/>
</dbReference>
<dbReference type="PROSITE" id="PS50093">
    <property type="entry name" value="PKD"/>
    <property type="match status" value="1"/>
</dbReference>
<sequence>MAQAVWSRLGRILWLACLLPWAPAGVAAGLYELNLTTDSPATTGAVVTISASLVAKDNGSLALPADAHLYRFHWIHTPLVLTGKMEKGLSSTIRVVGHVPGEFPVSVWVTAADCWMCQPVARGFVVLPITEFLVGDLVVTQNTSLPWPSSYLTKTVLKVSFLLHDPSNFLKTALFLYSWDFGDGTQMVTEDSVVYYNYSIIGTFTVKLKVVAEWEEVEPDATRAVKQKTGDFSASLKLQETLRGIQVLGPTLIQTFQKMTVTLNFLGSPPLTVCWRLKPECLPLEEGECHPVSVASTAYNLTHTFRDPGDYCFSIRAENIISKTHQYHKIQVWPSRIQPAVFAFPCATLITVMLAFIMYMTLRNATQQKDMVEVADFDFSPMSDKNPEPPSGVRCCCQMCCGPFLLETPSEYLEIVRENHGLLPPLYKSVKTYTV</sequence>
<feature type="signal peptide" evidence="1">
    <location>
        <begin position="1"/>
        <end position="24"/>
    </location>
</feature>
<feature type="chain" id="PRO_0000278276" description="Transmembrane protein 130">
    <location>
        <begin position="25"/>
        <end position="435"/>
    </location>
</feature>
<feature type="topological domain" description="Extracellular" evidence="1">
    <location>
        <begin position="25"/>
        <end position="339"/>
    </location>
</feature>
<feature type="transmembrane region" description="Helical" evidence="1">
    <location>
        <begin position="340"/>
        <end position="360"/>
    </location>
</feature>
<feature type="topological domain" description="Cytoplasmic" evidence="1">
    <location>
        <begin position="361"/>
        <end position="435"/>
    </location>
</feature>
<feature type="domain" description="PKD" evidence="2">
    <location>
        <begin position="147"/>
        <end position="233"/>
    </location>
</feature>
<feature type="glycosylation site" description="N-linked (GlcNAc...) asparagine" evidence="1">
    <location>
        <position position="34"/>
    </location>
</feature>
<feature type="glycosylation site" description="N-linked (GlcNAc...) asparagine" evidence="1">
    <location>
        <position position="197"/>
    </location>
</feature>
<feature type="glycosylation site" description="N-linked (GlcNAc...) asparagine" evidence="1">
    <location>
        <position position="300"/>
    </location>
</feature>
<feature type="splice variant" id="VSP_023257" description="In isoform 3." evidence="5 6">
    <location>
        <begin position="29"/>
        <end position="130"/>
    </location>
</feature>
<feature type="splice variant" id="VSP_023258" description="In isoform 2 and isoform 3." evidence="4 5 6 7">
    <location>
        <begin position="374"/>
        <end position="385"/>
    </location>
</feature>
<feature type="sequence variant" id="VAR_030740" description="In dbSNP:rs17161477.">
    <original>E</original>
    <variation>V</variation>
    <location>
        <position position="407"/>
    </location>
</feature>
<feature type="sequence conflict" description="In Ref. 3; CAD38628." evidence="8" ref="3">
    <original>P</original>
    <variation>S</variation>
    <location>
        <position position="104"/>
    </location>
</feature>
<feature type="sequence conflict" description="In Ref. 6; AAH37895." evidence="8" ref="6">
    <original>C</original>
    <variation>R</variation>
    <location>
        <position position="346"/>
    </location>
</feature>
<keyword id="KW-0025">Alternative splicing</keyword>
<keyword id="KW-0325">Glycoprotein</keyword>
<keyword id="KW-0333">Golgi apparatus</keyword>
<keyword id="KW-0472">Membrane</keyword>
<keyword id="KW-1267">Proteomics identification</keyword>
<keyword id="KW-1185">Reference proteome</keyword>
<keyword id="KW-0732">Signal</keyword>
<keyword id="KW-0812">Transmembrane</keyword>
<keyword id="KW-1133">Transmembrane helix</keyword>